<feature type="chain" id="PRO_0000304367" description="1-aminocyclopropane-1-carboxylate deaminase">
    <location>
        <begin position="1"/>
        <end position="338"/>
    </location>
</feature>
<feature type="active site" description="Nucleophile" evidence="1">
    <location>
        <position position="78"/>
    </location>
</feature>
<feature type="modified residue" description="N6-(pyridoxal phosphate)lysine" evidence="1">
    <location>
        <position position="51"/>
    </location>
</feature>
<protein>
    <recommendedName>
        <fullName evidence="1">1-aminocyclopropane-1-carboxylate deaminase</fullName>
        <shortName evidence="1">ACC deaminase</shortName>
        <shortName evidence="1">ACCD</shortName>
        <ecNumber evidence="1">3.5.99.7</ecNumber>
    </recommendedName>
</protein>
<reference key="1">
    <citation type="submission" date="2006-12" db="EMBL/GenBank/DDBJ databases">
        <title>Complete sequence of Acidovorax avenae subsp. citrulli AAC00-1.</title>
        <authorList>
            <person name="Copeland A."/>
            <person name="Lucas S."/>
            <person name="Lapidus A."/>
            <person name="Barry K."/>
            <person name="Detter J.C."/>
            <person name="Glavina del Rio T."/>
            <person name="Dalin E."/>
            <person name="Tice H."/>
            <person name="Pitluck S."/>
            <person name="Kiss H."/>
            <person name="Brettin T."/>
            <person name="Bruce D."/>
            <person name="Han C."/>
            <person name="Tapia R."/>
            <person name="Gilna P."/>
            <person name="Schmutz J."/>
            <person name="Larimer F."/>
            <person name="Land M."/>
            <person name="Hauser L."/>
            <person name="Kyrpides N."/>
            <person name="Kim E."/>
            <person name="Stahl D."/>
            <person name="Richardson P."/>
        </authorList>
    </citation>
    <scope>NUCLEOTIDE SEQUENCE [LARGE SCALE GENOMIC DNA]</scope>
    <source>
        <strain>AAC00-1</strain>
    </source>
</reference>
<keyword id="KW-0378">Hydrolase</keyword>
<keyword id="KW-0663">Pyridoxal phosphate</keyword>
<evidence type="ECO:0000255" key="1">
    <source>
        <dbReference type="HAMAP-Rule" id="MF_00807"/>
    </source>
</evidence>
<accession>A1TVP2</accession>
<gene>
    <name evidence="1" type="primary">acdS</name>
    <name type="ordered locus">Aave_4493</name>
</gene>
<organism>
    <name type="scientific">Paracidovorax citrulli (strain AAC00-1)</name>
    <name type="common">Acidovorax citrulli</name>
    <dbReference type="NCBI Taxonomy" id="397945"/>
    <lineage>
        <taxon>Bacteria</taxon>
        <taxon>Pseudomonadati</taxon>
        <taxon>Pseudomonadota</taxon>
        <taxon>Betaproteobacteria</taxon>
        <taxon>Burkholderiales</taxon>
        <taxon>Comamonadaceae</taxon>
        <taxon>Paracidovorax</taxon>
    </lineage>
</organism>
<dbReference type="EC" id="3.5.99.7" evidence="1"/>
<dbReference type="EMBL" id="CP000512">
    <property type="protein sequence ID" value="ABM35030.1"/>
    <property type="molecule type" value="Genomic_DNA"/>
</dbReference>
<dbReference type="RefSeq" id="WP_011797500.1">
    <property type="nucleotide sequence ID" value="NC_008752.1"/>
</dbReference>
<dbReference type="SMR" id="A1TVP2"/>
<dbReference type="STRING" id="397945.Aave_4493"/>
<dbReference type="KEGG" id="aav:Aave_4493"/>
<dbReference type="eggNOG" id="COG2515">
    <property type="taxonomic scope" value="Bacteria"/>
</dbReference>
<dbReference type="HOGENOM" id="CLU_048897_2_1_4"/>
<dbReference type="OrthoDB" id="9801249at2"/>
<dbReference type="Proteomes" id="UP000002596">
    <property type="component" value="Chromosome"/>
</dbReference>
<dbReference type="GO" id="GO:0008660">
    <property type="term" value="F:1-aminocyclopropane-1-carboxylate deaminase activity"/>
    <property type="evidence" value="ECO:0007669"/>
    <property type="project" value="UniProtKB-UniRule"/>
</dbReference>
<dbReference type="GO" id="GO:0019148">
    <property type="term" value="F:D-cysteine desulfhydrase activity"/>
    <property type="evidence" value="ECO:0007669"/>
    <property type="project" value="TreeGrafter"/>
</dbReference>
<dbReference type="GO" id="GO:0030170">
    <property type="term" value="F:pyridoxal phosphate binding"/>
    <property type="evidence" value="ECO:0007669"/>
    <property type="project" value="InterPro"/>
</dbReference>
<dbReference type="GO" id="GO:0018871">
    <property type="term" value="P:1-aminocyclopropane-1-carboxylate metabolic process"/>
    <property type="evidence" value="ECO:0007669"/>
    <property type="project" value="UniProtKB-UniRule"/>
</dbReference>
<dbReference type="GO" id="GO:0009310">
    <property type="term" value="P:amine catabolic process"/>
    <property type="evidence" value="ECO:0007669"/>
    <property type="project" value="InterPro"/>
</dbReference>
<dbReference type="CDD" id="cd06449">
    <property type="entry name" value="ACCD"/>
    <property type="match status" value="1"/>
</dbReference>
<dbReference type="FunFam" id="3.40.50.1100:FF:000048">
    <property type="entry name" value="1-aminocyclopropane-1-carboxylate deaminase"/>
    <property type="match status" value="1"/>
</dbReference>
<dbReference type="FunFam" id="3.40.50.1100:FF:000053">
    <property type="entry name" value="1-aminocyclopropane-1-carboxylate deaminase"/>
    <property type="match status" value="1"/>
</dbReference>
<dbReference type="Gene3D" id="3.40.50.1100">
    <property type="match status" value="2"/>
</dbReference>
<dbReference type="HAMAP" id="MF_00807">
    <property type="entry name" value="ACC_deaminase"/>
    <property type="match status" value="1"/>
</dbReference>
<dbReference type="InterPro" id="IPR027278">
    <property type="entry name" value="ACCD_DCysDesulf"/>
</dbReference>
<dbReference type="InterPro" id="IPR005965">
    <property type="entry name" value="ACP_carboxylate_deaminase"/>
</dbReference>
<dbReference type="InterPro" id="IPR020601">
    <property type="entry name" value="ACP_carboxylate_deaminase_bac"/>
</dbReference>
<dbReference type="InterPro" id="IPR001926">
    <property type="entry name" value="TrpB-like_PALP"/>
</dbReference>
<dbReference type="InterPro" id="IPR036052">
    <property type="entry name" value="TrpB-like_PALP_sf"/>
</dbReference>
<dbReference type="NCBIfam" id="TIGR01274">
    <property type="entry name" value="ACC_deam"/>
    <property type="match status" value="1"/>
</dbReference>
<dbReference type="PANTHER" id="PTHR43780">
    <property type="entry name" value="1-AMINOCYCLOPROPANE-1-CARBOXYLATE DEAMINASE-RELATED"/>
    <property type="match status" value="1"/>
</dbReference>
<dbReference type="PANTHER" id="PTHR43780:SF2">
    <property type="entry name" value="1-AMINOCYCLOPROPANE-1-CARBOXYLATE DEAMINASE-RELATED"/>
    <property type="match status" value="1"/>
</dbReference>
<dbReference type="Pfam" id="PF00291">
    <property type="entry name" value="PALP"/>
    <property type="match status" value="1"/>
</dbReference>
<dbReference type="PIRSF" id="PIRSF006278">
    <property type="entry name" value="ACCD_DCysDesulf"/>
    <property type="match status" value="1"/>
</dbReference>
<dbReference type="SUPFAM" id="SSF53686">
    <property type="entry name" value="Tryptophan synthase beta subunit-like PLP-dependent enzymes"/>
    <property type="match status" value="1"/>
</dbReference>
<name>1A1D_PARC0</name>
<comment type="function">
    <text evidence="1">Catalyzes a cyclopropane ring-opening reaction, the irreversible conversion of 1-aminocyclopropane-1-carboxylate (ACC) to ammonia and alpha-ketobutyrate. Allows growth on ACC as a nitrogen source.</text>
</comment>
<comment type="catalytic activity">
    <reaction evidence="1">
        <text>1-aminocyclopropane-1-carboxylate + H2O = 2-oxobutanoate + NH4(+)</text>
        <dbReference type="Rhea" id="RHEA:16933"/>
        <dbReference type="ChEBI" id="CHEBI:15377"/>
        <dbReference type="ChEBI" id="CHEBI:16763"/>
        <dbReference type="ChEBI" id="CHEBI:28938"/>
        <dbReference type="ChEBI" id="CHEBI:58360"/>
        <dbReference type="EC" id="3.5.99.7"/>
    </reaction>
</comment>
<comment type="cofactor">
    <cofactor evidence="1">
        <name>pyridoxal 5'-phosphate</name>
        <dbReference type="ChEBI" id="CHEBI:597326"/>
    </cofactor>
</comment>
<comment type="subunit">
    <text evidence="1">Homotrimer.</text>
</comment>
<comment type="similarity">
    <text evidence="1">Belongs to the ACC deaminase/D-cysteine desulfhydrase family.</text>
</comment>
<proteinExistence type="inferred from homology"/>
<sequence>MNLQKFPRHALTFGPTPIHPLKRLSAHLGGKVELYAKREDCNSGLAFGGNKTRKLEYLIPEAIEGGYDTLVSIGGIQSNQTRQVAAVAAHLGMKCVLVQENWVNYSDAVYDRVGNIEMSRIMGADVRLDAAGFDIGIRPSWEQAMEDVRRAGGKPFPIPAGCSEHPRGGLGFVAFAEEVRQQEEELGFQFDYIVVCSVTGSTQAGMVVGFAADGRADRVIGIDASAKPEQTREQILRIARNTAELVELGREITDADVVLDTRYGGPEYGLPNEGTLEAIRLCARQEGMLTDPVYEGKSMHGMIDMVRNGEFPAGSRVLYAHLGGVPALNAYSFLFRNG</sequence>